<gene>
    <name evidence="1" type="primary">tsaC</name>
    <name type="synonym">rimN</name>
    <name type="ordered locus">ACICU_00187</name>
</gene>
<dbReference type="EC" id="2.7.7.87" evidence="1"/>
<dbReference type="EMBL" id="CP000863">
    <property type="protein sequence ID" value="ACC55499.1"/>
    <property type="molecule type" value="Genomic_DNA"/>
</dbReference>
<dbReference type="RefSeq" id="WP_000633612.1">
    <property type="nucleotide sequence ID" value="NZ_CP031380.1"/>
</dbReference>
<dbReference type="SMR" id="B2I111"/>
<dbReference type="KEGG" id="abc:ACICU_00187"/>
<dbReference type="HOGENOM" id="CLU_031397_6_0_6"/>
<dbReference type="Proteomes" id="UP000008839">
    <property type="component" value="Chromosome"/>
</dbReference>
<dbReference type="GO" id="GO:0005737">
    <property type="term" value="C:cytoplasm"/>
    <property type="evidence" value="ECO:0007669"/>
    <property type="project" value="UniProtKB-SubCell"/>
</dbReference>
<dbReference type="GO" id="GO:0005524">
    <property type="term" value="F:ATP binding"/>
    <property type="evidence" value="ECO:0007669"/>
    <property type="project" value="UniProtKB-UniRule"/>
</dbReference>
<dbReference type="GO" id="GO:0003725">
    <property type="term" value="F:double-stranded RNA binding"/>
    <property type="evidence" value="ECO:0007669"/>
    <property type="project" value="InterPro"/>
</dbReference>
<dbReference type="GO" id="GO:0061710">
    <property type="term" value="F:L-threonylcarbamoyladenylate synthase"/>
    <property type="evidence" value="ECO:0007669"/>
    <property type="project" value="UniProtKB-EC"/>
</dbReference>
<dbReference type="GO" id="GO:0000049">
    <property type="term" value="F:tRNA binding"/>
    <property type="evidence" value="ECO:0007669"/>
    <property type="project" value="TreeGrafter"/>
</dbReference>
<dbReference type="GO" id="GO:0006450">
    <property type="term" value="P:regulation of translational fidelity"/>
    <property type="evidence" value="ECO:0007669"/>
    <property type="project" value="TreeGrafter"/>
</dbReference>
<dbReference type="GO" id="GO:0002949">
    <property type="term" value="P:tRNA threonylcarbamoyladenosine modification"/>
    <property type="evidence" value="ECO:0007669"/>
    <property type="project" value="UniProtKB-UniRule"/>
</dbReference>
<dbReference type="Gene3D" id="3.90.870.10">
    <property type="entry name" value="DHBP synthase"/>
    <property type="match status" value="1"/>
</dbReference>
<dbReference type="HAMAP" id="MF_01852">
    <property type="entry name" value="TsaC"/>
    <property type="match status" value="1"/>
</dbReference>
<dbReference type="InterPro" id="IPR017945">
    <property type="entry name" value="DHBP_synth_RibB-like_a/b_dom"/>
</dbReference>
<dbReference type="InterPro" id="IPR006070">
    <property type="entry name" value="Sua5-like_dom"/>
</dbReference>
<dbReference type="InterPro" id="IPR023535">
    <property type="entry name" value="TC-AMP_synthase"/>
</dbReference>
<dbReference type="InterPro" id="IPR050156">
    <property type="entry name" value="TC-AMP_synthase_SUA5"/>
</dbReference>
<dbReference type="PANTHER" id="PTHR17490">
    <property type="entry name" value="SUA5"/>
    <property type="match status" value="1"/>
</dbReference>
<dbReference type="PANTHER" id="PTHR17490:SF18">
    <property type="entry name" value="THREONYLCARBAMOYL-AMP SYNTHASE"/>
    <property type="match status" value="1"/>
</dbReference>
<dbReference type="Pfam" id="PF01300">
    <property type="entry name" value="Sua5_yciO_yrdC"/>
    <property type="match status" value="1"/>
</dbReference>
<dbReference type="SUPFAM" id="SSF55821">
    <property type="entry name" value="YrdC/RibB"/>
    <property type="match status" value="1"/>
</dbReference>
<dbReference type="PROSITE" id="PS51163">
    <property type="entry name" value="YRDC"/>
    <property type="match status" value="1"/>
</dbReference>
<reference key="1">
    <citation type="journal article" date="2008" name="Antimicrob. Agents Chemother.">
        <title>Whole-genome pyrosequencing of an epidemic multidrug-resistant Acinetobacter baumannii strain belonging to the European clone II group.</title>
        <authorList>
            <person name="Iacono M."/>
            <person name="Villa L."/>
            <person name="Fortini D."/>
            <person name="Bordoni R."/>
            <person name="Imperi F."/>
            <person name="Bonnal R.J."/>
            <person name="Sicheritz-Ponten T."/>
            <person name="De Bellis G."/>
            <person name="Visca P."/>
            <person name="Cassone A."/>
            <person name="Carattoli A."/>
        </authorList>
    </citation>
    <scope>NUCLEOTIDE SEQUENCE [LARGE SCALE GENOMIC DNA]</scope>
    <source>
        <strain>ACICU</strain>
    </source>
</reference>
<accession>B2I111</accession>
<organism>
    <name type="scientific">Acinetobacter baumannii (strain ACICU)</name>
    <dbReference type="NCBI Taxonomy" id="405416"/>
    <lineage>
        <taxon>Bacteria</taxon>
        <taxon>Pseudomonadati</taxon>
        <taxon>Pseudomonadota</taxon>
        <taxon>Gammaproteobacteria</taxon>
        <taxon>Moraxellales</taxon>
        <taxon>Moraxellaceae</taxon>
        <taxon>Acinetobacter</taxon>
        <taxon>Acinetobacter calcoaceticus/baumannii complex</taxon>
    </lineage>
</organism>
<protein>
    <recommendedName>
        <fullName evidence="1">Threonylcarbamoyl-AMP synthase</fullName>
        <shortName evidence="1">TC-AMP synthase</shortName>
        <ecNumber evidence="1">2.7.7.87</ecNumber>
    </recommendedName>
    <alternativeName>
        <fullName evidence="1">L-threonylcarbamoyladenylate synthase</fullName>
    </alternativeName>
    <alternativeName>
        <fullName evidence="1">t(6)A37 threonylcarbamoyladenosine biosynthesis protein TsaC</fullName>
    </alternativeName>
    <alternativeName>
        <fullName evidence="1">tRNA threonylcarbamoyladenosine biosynthesis protein TsaC</fullName>
    </alternativeName>
</protein>
<feature type="chain" id="PRO_0000352886" description="Threonylcarbamoyl-AMP synthase">
    <location>
        <begin position="1"/>
        <end position="189"/>
    </location>
</feature>
<feature type="domain" description="YrdC-like" evidence="1">
    <location>
        <begin position="3"/>
        <end position="189"/>
    </location>
</feature>
<sequence>MITTSVTEAAECLQQGQVLAYPTEAVWGLGCDPFNEQAFQKILELKQRPIEKGVILLAGHISQVEHLLTSLPQTTQQEIIDCWTNHQPSERATTWLLPADQHIPSWIKGEHPLVAVRVTTHPLCVALCNAFHGFIVSTSANPSGQEPAHSLQDACQYFGSQLNYLNGDLGQSQQPSRIINALTGEVIRP</sequence>
<evidence type="ECO:0000255" key="1">
    <source>
        <dbReference type="HAMAP-Rule" id="MF_01852"/>
    </source>
</evidence>
<keyword id="KW-0067">ATP-binding</keyword>
<keyword id="KW-0963">Cytoplasm</keyword>
<keyword id="KW-0547">Nucleotide-binding</keyword>
<keyword id="KW-0548">Nucleotidyltransferase</keyword>
<keyword id="KW-0808">Transferase</keyword>
<keyword id="KW-0819">tRNA processing</keyword>
<proteinExistence type="inferred from homology"/>
<comment type="function">
    <text evidence="1">Required for the formation of a threonylcarbamoyl group on adenosine at position 37 (t(6)A37) in tRNAs that read codons beginning with adenine. Catalyzes the conversion of L-threonine, HCO(3)(-)/CO(2) and ATP to give threonylcarbamoyl-AMP (TC-AMP) as the acyladenylate intermediate, with the release of diphosphate.</text>
</comment>
<comment type="catalytic activity">
    <reaction evidence="1">
        <text>L-threonine + hydrogencarbonate + ATP = L-threonylcarbamoyladenylate + diphosphate + H2O</text>
        <dbReference type="Rhea" id="RHEA:36407"/>
        <dbReference type="ChEBI" id="CHEBI:15377"/>
        <dbReference type="ChEBI" id="CHEBI:17544"/>
        <dbReference type="ChEBI" id="CHEBI:30616"/>
        <dbReference type="ChEBI" id="CHEBI:33019"/>
        <dbReference type="ChEBI" id="CHEBI:57926"/>
        <dbReference type="ChEBI" id="CHEBI:73682"/>
        <dbReference type="EC" id="2.7.7.87"/>
    </reaction>
</comment>
<comment type="subcellular location">
    <subcellularLocation>
        <location evidence="1">Cytoplasm</location>
    </subcellularLocation>
</comment>
<comment type="similarity">
    <text evidence="1">Belongs to the SUA5 family. TsaC subfamily.</text>
</comment>
<name>TSAC_ACIBC</name>